<dbReference type="EMBL" id="DQ372076">
    <property type="protein sequence ID" value="ABD18451.1"/>
    <property type="molecule type" value="mRNA"/>
</dbReference>
<dbReference type="EMBL" id="DQ629152">
    <property type="protein sequence ID" value="ABK55636.1"/>
    <property type="molecule type" value="mRNA"/>
</dbReference>
<dbReference type="RefSeq" id="NP_001038071.1">
    <property type="nucleotide sequence ID" value="NM_001044606.2"/>
</dbReference>
<dbReference type="PDB" id="6J5I">
    <property type="method" value="EM"/>
    <property type="resolution" value="3.34 A"/>
    <property type="chains" value="S=24-210"/>
</dbReference>
<dbReference type="PDB" id="6J5J">
    <property type="method" value="EM"/>
    <property type="resolution" value="3.45 A"/>
    <property type="chains" value="S=24-210"/>
</dbReference>
<dbReference type="PDB" id="6J5K">
    <property type="method" value="EM"/>
    <property type="resolution" value="6.20 A"/>
    <property type="chains" value="AS/BS/CS/S=24-210"/>
</dbReference>
<dbReference type="PDBsum" id="6J5I"/>
<dbReference type="PDBsum" id="6J5J"/>
<dbReference type="PDBsum" id="6J5K"/>
<dbReference type="SMR" id="Q2EN81"/>
<dbReference type="FunCoup" id="Q2EN81">
    <property type="interactions" value="1854"/>
</dbReference>
<dbReference type="IntAct" id="Q2EN81">
    <property type="interactions" value="1"/>
</dbReference>
<dbReference type="STRING" id="9823.ENSSSCP00000012823"/>
<dbReference type="iPTMnet" id="Q2EN81"/>
<dbReference type="PaxDb" id="9823-ENSSSCP00000012823"/>
<dbReference type="PeptideAtlas" id="Q2EN81"/>
<dbReference type="Ensembl" id="ENSSSCT00015018838.1">
    <property type="protein sequence ID" value="ENSSSCP00015007400.1"/>
    <property type="gene ID" value="ENSSSCG00015014218.1"/>
</dbReference>
<dbReference type="Ensembl" id="ENSSSCT00045040050.1">
    <property type="protein sequence ID" value="ENSSSCP00045027906.1"/>
    <property type="gene ID" value="ENSSSCG00045023435.1"/>
</dbReference>
<dbReference type="Ensembl" id="ENSSSCT00050025904.1">
    <property type="protein sequence ID" value="ENSSSCP00050010735.1"/>
    <property type="gene ID" value="ENSSSCG00050019184.1"/>
</dbReference>
<dbReference type="Ensembl" id="ENSSSCT00055047322.1">
    <property type="protein sequence ID" value="ENSSSCP00055037761.1"/>
    <property type="gene ID" value="ENSSSCG00055024030.1"/>
</dbReference>
<dbReference type="Ensembl" id="ENSSSCT00060103661.1">
    <property type="protein sequence ID" value="ENSSSCP00060045329.1"/>
    <property type="gene ID" value="ENSSSCG00060075675.1"/>
</dbReference>
<dbReference type="Ensembl" id="ENSSSCT00065042587.1">
    <property type="protein sequence ID" value="ENSSSCP00065018055.1"/>
    <property type="gene ID" value="ENSSSCG00065031487.1"/>
</dbReference>
<dbReference type="Ensembl" id="ENSSSCT00105031108">
    <property type="protein sequence ID" value="ENSSSCP00105021680"/>
    <property type="gene ID" value="ENSSSCG00105016219"/>
</dbReference>
<dbReference type="Ensembl" id="ENSSSCT00110029697">
    <property type="protein sequence ID" value="ENSSSCP00110020062"/>
    <property type="gene ID" value="ENSSSCG00110015572"/>
</dbReference>
<dbReference type="GeneID" id="733678"/>
<dbReference type="KEGG" id="ssc:733678"/>
<dbReference type="CTD" id="539"/>
<dbReference type="eggNOG" id="KOG1662">
    <property type="taxonomic scope" value="Eukaryota"/>
</dbReference>
<dbReference type="HOGENOM" id="CLU_085114_0_0_1"/>
<dbReference type="InParanoid" id="Q2EN81"/>
<dbReference type="OrthoDB" id="1262810at2759"/>
<dbReference type="TreeFam" id="TF106241"/>
<dbReference type="Reactome" id="R-SSC-163210">
    <property type="pathway name" value="Formation of ATP by chemiosmotic coupling"/>
</dbReference>
<dbReference type="Reactome" id="R-SSC-8949613">
    <property type="pathway name" value="Cristae formation"/>
</dbReference>
<dbReference type="Reactome" id="R-SSC-9837999">
    <property type="pathway name" value="Mitochondrial protein degradation"/>
</dbReference>
<dbReference type="Proteomes" id="UP000008227">
    <property type="component" value="Unplaced"/>
</dbReference>
<dbReference type="Proteomes" id="UP000314985">
    <property type="component" value="Unplaced"/>
</dbReference>
<dbReference type="Proteomes" id="UP000694570">
    <property type="component" value="Unplaced"/>
</dbReference>
<dbReference type="Proteomes" id="UP000694571">
    <property type="component" value="Unplaced"/>
</dbReference>
<dbReference type="Proteomes" id="UP000694720">
    <property type="component" value="Unplaced"/>
</dbReference>
<dbReference type="Proteomes" id="UP000694722">
    <property type="component" value="Unplaced"/>
</dbReference>
<dbReference type="Proteomes" id="UP000694723">
    <property type="component" value="Unplaced"/>
</dbReference>
<dbReference type="Proteomes" id="UP000694724">
    <property type="component" value="Unplaced"/>
</dbReference>
<dbReference type="Proteomes" id="UP000694725">
    <property type="component" value="Unplaced"/>
</dbReference>
<dbReference type="Proteomes" id="UP000694726">
    <property type="component" value="Unplaced"/>
</dbReference>
<dbReference type="Proteomes" id="UP000694727">
    <property type="component" value="Unplaced"/>
</dbReference>
<dbReference type="Proteomes" id="UP000694728">
    <property type="component" value="Unplaced"/>
</dbReference>
<dbReference type="GO" id="GO:0005743">
    <property type="term" value="C:mitochondrial inner membrane"/>
    <property type="evidence" value="ECO:0007669"/>
    <property type="project" value="UniProtKB-SubCell"/>
</dbReference>
<dbReference type="GO" id="GO:0045259">
    <property type="term" value="C:proton-transporting ATP synthase complex"/>
    <property type="evidence" value="ECO:0000250"/>
    <property type="project" value="UniProtKB"/>
</dbReference>
<dbReference type="GO" id="GO:0046933">
    <property type="term" value="F:proton-transporting ATP synthase activity, rotational mechanism"/>
    <property type="evidence" value="ECO:0007669"/>
    <property type="project" value="InterPro"/>
</dbReference>
<dbReference type="GO" id="GO:0042776">
    <property type="term" value="P:proton motive force-driven mitochondrial ATP synthesis"/>
    <property type="evidence" value="ECO:0000318"/>
    <property type="project" value="GO_Central"/>
</dbReference>
<dbReference type="FunFam" id="1.10.520.20:FF:000002">
    <property type="entry name" value="ATP synthase subunit O, mitochondrial"/>
    <property type="match status" value="1"/>
</dbReference>
<dbReference type="Gene3D" id="1.10.520.20">
    <property type="entry name" value="N-terminal domain of the delta subunit of the F1F0-ATP synthase"/>
    <property type="match status" value="1"/>
</dbReference>
<dbReference type="HAMAP" id="MF_01416">
    <property type="entry name" value="ATP_synth_delta_bact"/>
    <property type="match status" value="1"/>
</dbReference>
<dbReference type="InterPro" id="IPR026015">
    <property type="entry name" value="ATP_synth_OSCP/delta_N_sf"/>
</dbReference>
<dbReference type="InterPro" id="IPR020781">
    <property type="entry name" value="ATPase_OSCP/d_CS"/>
</dbReference>
<dbReference type="InterPro" id="IPR000711">
    <property type="entry name" value="ATPase_OSCP/dsu"/>
</dbReference>
<dbReference type="NCBIfam" id="TIGR01145">
    <property type="entry name" value="ATP_synt_delta"/>
    <property type="match status" value="1"/>
</dbReference>
<dbReference type="NCBIfam" id="NF004402">
    <property type="entry name" value="PRK05758.2-2"/>
    <property type="match status" value="1"/>
</dbReference>
<dbReference type="PANTHER" id="PTHR11910">
    <property type="entry name" value="ATP SYNTHASE DELTA CHAIN"/>
    <property type="match status" value="1"/>
</dbReference>
<dbReference type="Pfam" id="PF00213">
    <property type="entry name" value="OSCP"/>
    <property type="match status" value="1"/>
</dbReference>
<dbReference type="PRINTS" id="PR00125">
    <property type="entry name" value="ATPASEDELTA"/>
</dbReference>
<dbReference type="SUPFAM" id="SSF47928">
    <property type="entry name" value="N-terminal domain of the delta subunit of the F1F0-ATP synthase"/>
    <property type="match status" value="1"/>
</dbReference>
<dbReference type="PROSITE" id="PS00389">
    <property type="entry name" value="ATPASE_DELTA"/>
    <property type="match status" value="1"/>
</dbReference>
<organism>
    <name type="scientific">Sus scrofa</name>
    <name type="common">Pig</name>
    <dbReference type="NCBI Taxonomy" id="9823"/>
    <lineage>
        <taxon>Eukaryota</taxon>
        <taxon>Metazoa</taxon>
        <taxon>Chordata</taxon>
        <taxon>Craniata</taxon>
        <taxon>Vertebrata</taxon>
        <taxon>Euteleostomi</taxon>
        <taxon>Mammalia</taxon>
        <taxon>Eutheria</taxon>
        <taxon>Laurasiatheria</taxon>
        <taxon>Artiodactyla</taxon>
        <taxon>Suina</taxon>
        <taxon>Suidae</taxon>
        <taxon>Sus</taxon>
    </lineage>
</organism>
<comment type="function">
    <text evidence="2 3 4">Subunit OSCP, of the mitochondrial membrane ATP synthase complex (F(1)F(0) ATP synthase or Complex V) that produces ATP from ADP in the presence of a proton gradient across the membrane which is generated by electron transport complexes of the respiratory chain. ATP synthase complex consist of a soluble F(1) head domain - the catalytic core - and a membrane F(1) domain - the membrane proton channel. These two domains are linked by a central stalk rotating inside the F(1) region and a stationary peripheral stalk. During catalysis, ATP synthesis in the catalytic domain of F(1) is coupled via a rotary mechanism of the central stalk subunits to proton translocation (By similarity). In vivo, can only synthesize ATP although its ATP hydrolase activity can be activated artificially in vitro (By similarity). Part of the complex F(0) domain (By similarity). Part of the complex F(0) domain and the peripheric stalk, which acts as a stator to hold the catalytic alpha(3)beta(3) subcomplex and subunit a/ATP6 static relative to the rotary elements (By similarity).</text>
</comment>
<comment type="subunit">
    <text evidence="4">Component of the ATP synthase complex composed at least of ATP5F1A/subunit alpha, ATP5F1B/subunit beta, ATP5MC1/subunit c (homooctomer), MT-ATP6/subunit a, MT-ATP8/subunit 8, ATP5ME/subunit e, ATP5MF/subunit f, ATP5MG/subunit g, ATP5MK/subunit k, ATP5MJ/subunit j, ATP5F1C/subunit gamma, ATP5F1D/subunit delta, ATP5F1E/subunit epsilon, ATP5PF/subunit F6, ATP5PB/subunit b, ATP5PD/subunit d, ATP5PO/subunit OSCP. ATP synthase complex consists of a soluble F(1) head domain (subunits alpha(3) and beta(3)) - the catalytic core - and a membrane F(0) domain - the membrane proton channel (subunits c, a, 8, e, f, g, k and j). These two domains are linked by a central stalk (subunits gamma, delta, and epsilon) rotating inside the F1 region and a stationary peripheral stalk (subunits F6, b, d, and OSCP).</text>
</comment>
<comment type="subcellular location">
    <subcellularLocation>
        <location evidence="1">Mitochondrion</location>
    </subcellularLocation>
    <subcellularLocation>
        <location evidence="1">Mitochondrion inner membrane</location>
    </subcellularLocation>
</comment>
<comment type="PTM">
    <text evidence="4">Acetylation at Lys-162 decreases ATP production. Deacetylated by SIRT3 (By similarity).</text>
</comment>
<comment type="PTM">
    <text evidence="4">In response to mitochondrial stress, the precursor protein is ubiquitinated by the SIFI complex in the cytoplasm before mitochondrial import, leading to its degradation. Within the SIFI complex, UBR4 initiates ubiquitin chain that are further elongated or branched by KCMF1.</text>
</comment>
<comment type="similarity">
    <text evidence="7">Belongs to the ATPase delta chain family.</text>
</comment>
<feature type="transit peptide" description="Mitochondrion" evidence="6">
    <location>
        <begin position="1"/>
        <end position="23"/>
    </location>
</feature>
<feature type="chain" id="PRO_0000350579" description="ATP synthase peripheral stalk subunit OSCP, mitochondrial">
    <location>
        <begin position="24"/>
        <end position="213"/>
    </location>
</feature>
<feature type="short sequence motif" description="SIFI-degron" evidence="4">
    <location>
        <begin position="5"/>
        <end position="23"/>
    </location>
</feature>
<feature type="modified residue" description="N6-acetyllysine" evidence="5">
    <location>
        <position position="54"/>
    </location>
</feature>
<feature type="modified residue" description="N6-acetyllysine" evidence="5">
    <location>
        <position position="60"/>
    </location>
</feature>
<feature type="modified residue" description="N6-acetyllysine" evidence="5">
    <location>
        <position position="70"/>
    </location>
</feature>
<feature type="modified residue" description="N6-acetyllysine" evidence="5">
    <location>
        <position position="73"/>
    </location>
</feature>
<feature type="modified residue" description="N6-succinyllysine" evidence="5">
    <location>
        <position position="90"/>
    </location>
</feature>
<feature type="modified residue" description="N6-acetyllysine; alternate" evidence="5">
    <location>
        <position position="100"/>
    </location>
</feature>
<feature type="modified residue" description="N6-succinyllysine; alternate" evidence="5">
    <location>
        <position position="100"/>
    </location>
</feature>
<feature type="modified residue" description="N6-acetyllysine; alternate" evidence="5">
    <location>
        <position position="158"/>
    </location>
</feature>
<feature type="modified residue" description="N6-succinyllysine; alternate" evidence="5">
    <location>
        <position position="158"/>
    </location>
</feature>
<feature type="modified residue" description="N6-acetyllysine; alternate" evidence="4">
    <location>
        <position position="162"/>
    </location>
</feature>
<feature type="modified residue" description="N6-succinyllysine; alternate" evidence="5">
    <location>
        <position position="162"/>
    </location>
</feature>
<feature type="modified residue" description="N6-acetyllysine" evidence="4">
    <location>
        <position position="172"/>
    </location>
</feature>
<feature type="modified residue" description="N6-acetyllysine" evidence="5">
    <location>
        <position position="176"/>
    </location>
</feature>
<feature type="modified residue" description="N6-acetyllysine" evidence="4">
    <location>
        <position position="192"/>
    </location>
</feature>
<feature type="modified residue" description="N6-succinyllysine" evidence="5">
    <location>
        <position position="199"/>
    </location>
</feature>
<feature type="sequence conflict" description="In Ref. 2; ABK55636." evidence="7" ref="2">
    <original>N</original>
    <variation>S</variation>
    <location>
        <position position="110"/>
    </location>
</feature>
<feature type="sequence conflict" description="In Ref. 3; AA sequence." evidence="7" ref="3">
    <original>S</original>
    <variation>N</variation>
    <location>
        <position position="120"/>
    </location>
</feature>
<feature type="sequence conflict" description="In Ref. 3; AA sequence." evidence="7" ref="3">
    <original>P</original>
    <variation>A</variation>
    <location>
        <position position="148"/>
    </location>
</feature>
<feature type="sequence conflict" description="In Ref. 3; AA sequence." evidence="7" ref="3">
    <original>Q</original>
    <variation>E</variation>
    <location>
        <position position="169"/>
    </location>
</feature>
<feature type="sequence conflict" description="In Ref. 2; ABK55636." evidence="7" ref="2">
    <original>R</original>
    <variation>Q</variation>
    <location>
        <position position="188"/>
    </location>
</feature>
<feature type="sequence conflict" description="In Ref. 3; AA sequence." evidence="7" ref="3">
    <original>F</original>
    <variation>L</variation>
    <location>
        <position position="213"/>
    </location>
</feature>
<feature type="helix" evidence="8">
    <location>
        <begin position="36"/>
        <end position="50"/>
    </location>
</feature>
<feature type="helix" evidence="8">
    <location>
        <begin position="51"/>
        <end position="53"/>
    </location>
</feature>
<feature type="helix" evidence="8">
    <location>
        <begin position="55"/>
        <end position="68"/>
    </location>
</feature>
<feature type="turn" evidence="8">
    <location>
        <begin position="72"/>
        <end position="74"/>
    </location>
</feature>
<feature type="helix" evidence="8">
    <location>
        <begin position="75"/>
        <end position="77"/>
    </location>
</feature>
<feature type="strand" evidence="8">
    <location>
        <begin position="81"/>
        <end position="83"/>
    </location>
</feature>
<feature type="helix" evidence="8">
    <location>
        <begin position="87"/>
        <end position="98"/>
    </location>
</feature>
<feature type="helix" evidence="8">
    <location>
        <begin position="105"/>
        <end position="115"/>
    </location>
</feature>
<feature type="helix" evidence="9">
    <location>
        <begin position="117"/>
        <end position="120"/>
    </location>
</feature>
<feature type="helix" evidence="8">
    <location>
        <begin position="121"/>
        <end position="133"/>
    </location>
</feature>
<feature type="turn" evidence="8">
    <location>
        <begin position="134"/>
        <end position="136"/>
    </location>
</feature>
<feature type="strand" evidence="8">
    <location>
        <begin position="141"/>
        <end position="144"/>
    </location>
</feature>
<feature type="helix" evidence="8">
    <location>
        <begin position="154"/>
        <end position="157"/>
    </location>
</feature>
<feature type="turn" evidence="8">
    <location>
        <begin position="158"/>
        <end position="161"/>
    </location>
</feature>
<feature type="helix" evidence="8">
    <location>
        <begin position="162"/>
        <end position="165"/>
    </location>
</feature>
<feature type="strand" evidence="8">
    <location>
        <begin position="173"/>
        <end position="175"/>
    </location>
</feature>
<feature type="strand" evidence="8">
    <location>
        <begin position="179"/>
        <end position="181"/>
    </location>
</feature>
<feature type="strand" evidence="8">
    <location>
        <begin position="185"/>
        <end position="187"/>
    </location>
</feature>
<feature type="strand" evidence="8">
    <location>
        <begin position="189"/>
        <end position="191"/>
    </location>
</feature>
<feature type="strand" evidence="8">
    <location>
        <begin position="194"/>
        <end position="197"/>
    </location>
</feature>
<feature type="helix" evidence="8">
    <location>
        <begin position="198"/>
        <end position="205"/>
    </location>
</feature>
<sequence>MASQAVSGLSRQVRCFSTSVVRPFAKLVRPPVQIYGIEGRYATALYSAASKQNKLEQVEKELLRVAQILKEPKVAASIMNPYVKRSVKVKSLSDMTAKEKFSPLTSNLINLLAENGRLSSTPGVISAFSTMMSVHRGEVPCSVTTASPLDEATLTELKTVLKSFLSKGQILKLEVKVDPSIMGGMIVRIGEKYVDMSAKTKIQKLSRAMREIF</sequence>
<reference key="1">
    <citation type="submission" date="2006-01" db="EMBL/GenBank/DDBJ databases">
        <authorList>
            <person name="Chen C.H."/>
            <person name="Ding S.T."/>
        </authorList>
    </citation>
    <scope>NUCLEOTIDE SEQUENCE [MRNA]</scope>
</reference>
<reference key="2">
    <citation type="submission" date="2006-05" db="EMBL/GenBank/DDBJ databases">
        <title>Generation and analysis of cDNA sequences derived from a porcine skeletal muscle library.</title>
        <authorList>
            <person name="Cai G."/>
            <person name="Chen Y."/>
            <person name="Wang C."/>
            <person name="Li J."/>
            <person name="Peng G."/>
            <person name="Zhang H."/>
        </authorList>
    </citation>
    <scope>NUCLEOTIDE SEQUENCE [MRNA]</scope>
    <source>
        <tissue>Longissimus dorsi muscle</tissue>
    </source>
</reference>
<reference key="3">
    <citation type="journal article" date="1994" name="Bioorg. Khim.">
        <title>Study of the structural organization of OSCP -- subunits of H+-ATPase of porcine heart mitochondria.</title>
        <authorList>
            <person name="Grinkevich V.A."/>
            <person name="Zaitsev V.G."/>
            <person name="Pavlov P.F."/>
            <person name="Nazimov I.V."/>
            <person name="Il'ina E.F."/>
        </authorList>
    </citation>
    <scope>PROTEIN SEQUENCE OF 24-213</scope>
    <source>
        <tissue>Heart</tissue>
    </source>
</reference>
<gene>
    <name evidence="4" type="primary">ATP5PO</name>
    <name type="synonym">ATP5O</name>
</gene>
<accession>Q2EN81</accession>
<accession>A1XQT0</accession>
<accession>Q9T2U6</accession>
<keyword id="KW-0002">3D-structure</keyword>
<keyword id="KW-0007">Acetylation</keyword>
<keyword id="KW-0066">ATP synthesis</keyword>
<keyword id="KW-0903">Direct protein sequencing</keyword>
<keyword id="KW-0375">Hydrogen ion transport</keyword>
<keyword id="KW-0406">Ion transport</keyword>
<keyword id="KW-0472">Membrane</keyword>
<keyword id="KW-0496">Mitochondrion</keyword>
<keyword id="KW-0999">Mitochondrion inner membrane</keyword>
<keyword id="KW-1185">Reference proteome</keyword>
<keyword id="KW-0809">Transit peptide</keyword>
<keyword id="KW-0813">Transport</keyword>
<keyword id="KW-0832">Ubl conjugation</keyword>
<name>ATPO_PIG</name>
<evidence type="ECO:0000250" key="1"/>
<evidence type="ECO:0000250" key="2">
    <source>
        <dbReference type="UniProtKB" id="P13621"/>
    </source>
</evidence>
<evidence type="ECO:0000250" key="3">
    <source>
        <dbReference type="UniProtKB" id="P19483"/>
    </source>
</evidence>
<evidence type="ECO:0000250" key="4">
    <source>
        <dbReference type="UniProtKB" id="P48047"/>
    </source>
</evidence>
<evidence type="ECO:0000250" key="5">
    <source>
        <dbReference type="UniProtKB" id="Q9DB20"/>
    </source>
</evidence>
<evidence type="ECO:0000269" key="6">
    <source>
    </source>
</evidence>
<evidence type="ECO:0000305" key="7"/>
<evidence type="ECO:0007829" key="8">
    <source>
        <dbReference type="PDB" id="6J5I"/>
    </source>
</evidence>
<evidence type="ECO:0007829" key="9">
    <source>
        <dbReference type="PDB" id="6J5J"/>
    </source>
</evidence>
<proteinExistence type="evidence at protein level"/>
<protein>
    <recommendedName>
        <fullName evidence="4">ATP synthase peripheral stalk subunit OSCP, mitochondrial</fullName>
    </recommendedName>
    <alternativeName>
        <fullName evidence="7">ATP synthase subunit O</fullName>
    </alternativeName>
    <alternativeName>
        <fullName>Oligomycin sensitivity conferral protein</fullName>
        <shortName>OSCP</shortName>
    </alternativeName>
</protein>